<comment type="function">
    <text evidence="1">Required for anaerobic carnitine reduction. May bring reductant to CaiA.</text>
</comment>
<comment type="pathway">
    <text evidence="1">Amine and polyamine metabolism; carnitine metabolism.</text>
</comment>
<comment type="subunit">
    <text evidence="1">Heterodimer of FixA and FixB.</text>
</comment>
<comment type="similarity">
    <text evidence="1">Belongs to the ETF alpha-subunit/FixB family.</text>
</comment>
<protein>
    <recommendedName>
        <fullName evidence="1">Protein FixB</fullName>
    </recommendedName>
</protein>
<feature type="chain" id="PRO_1000136331" description="Protein FixB">
    <location>
        <begin position="1"/>
        <end position="313"/>
    </location>
</feature>
<feature type="binding site" evidence="1">
    <location>
        <begin position="255"/>
        <end position="283"/>
    </location>
    <ligand>
        <name>FAD</name>
        <dbReference type="ChEBI" id="CHEBI:57692"/>
    </ligand>
</feature>
<evidence type="ECO:0000255" key="1">
    <source>
        <dbReference type="HAMAP-Rule" id="MF_01056"/>
    </source>
</evidence>
<name>FIXB_ECODH</name>
<proteinExistence type="inferred from homology"/>
<reference key="1">
    <citation type="journal article" date="2008" name="J. Bacteriol.">
        <title>The complete genome sequence of Escherichia coli DH10B: insights into the biology of a laboratory workhorse.</title>
        <authorList>
            <person name="Durfee T."/>
            <person name="Nelson R."/>
            <person name="Baldwin S."/>
            <person name="Plunkett G. III"/>
            <person name="Burland V."/>
            <person name="Mau B."/>
            <person name="Petrosino J.F."/>
            <person name="Qin X."/>
            <person name="Muzny D.M."/>
            <person name="Ayele M."/>
            <person name="Gibbs R.A."/>
            <person name="Csorgo B."/>
            <person name="Posfai G."/>
            <person name="Weinstock G.M."/>
            <person name="Blattner F.R."/>
        </authorList>
    </citation>
    <scope>NUCLEOTIDE SEQUENCE [LARGE SCALE GENOMIC DNA]</scope>
    <source>
        <strain>K12 / DH10B</strain>
    </source>
</reference>
<sequence length="313" mass="33513">MNTFSQVWVFSDTPSRLPELMNGAQALANQINTFVLNDADGAQAIQLGANHVWKLNGKPDDRMIEDYAGVMADTIRQHGADGLVLLPNTRRGKLLAAKLGYRLKAAVSNDASTVSVQDGKATVKHMVYGGLAIGEERIATPYAVLTISSGTFDAAQPDASRTGETHTVEWQAPAVAITRTATQARQSNSVDLDKARLVVSVGRGIGSKENIALAEQLCKAIGAELACSRPVAENEKWMEHERYVGISNLMLKPELYLAVGISGQIQHMVGANASQTIFAINKDKNAPIFQYADYGIVGDAVKILPALTAALAR</sequence>
<accession>B1XBG7</accession>
<keyword id="KW-0249">Electron transport</keyword>
<keyword id="KW-0274">FAD</keyword>
<keyword id="KW-0285">Flavoprotein</keyword>
<keyword id="KW-0813">Transport</keyword>
<gene>
    <name evidence="1" type="primary">fixB</name>
    <name type="ordered locus">ECDH10B_0043</name>
</gene>
<organism>
    <name type="scientific">Escherichia coli (strain K12 / DH10B)</name>
    <dbReference type="NCBI Taxonomy" id="316385"/>
    <lineage>
        <taxon>Bacteria</taxon>
        <taxon>Pseudomonadati</taxon>
        <taxon>Pseudomonadota</taxon>
        <taxon>Gammaproteobacteria</taxon>
        <taxon>Enterobacterales</taxon>
        <taxon>Enterobacteriaceae</taxon>
        <taxon>Escherichia</taxon>
    </lineage>
</organism>
<dbReference type="EMBL" id="CP000948">
    <property type="protein sequence ID" value="ACB01247.1"/>
    <property type="molecule type" value="Genomic_DNA"/>
</dbReference>
<dbReference type="RefSeq" id="WP_001091499.1">
    <property type="nucleotide sequence ID" value="NC_010473.1"/>
</dbReference>
<dbReference type="SMR" id="B1XBG7"/>
<dbReference type="KEGG" id="ecd:ECDH10B_0043"/>
<dbReference type="HOGENOM" id="CLU_034178_0_1_6"/>
<dbReference type="UniPathway" id="UPA00117"/>
<dbReference type="GO" id="GO:0009055">
    <property type="term" value="F:electron transfer activity"/>
    <property type="evidence" value="ECO:0007669"/>
    <property type="project" value="InterPro"/>
</dbReference>
<dbReference type="GO" id="GO:0050660">
    <property type="term" value="F:flavin adenine dinucleotide binding"/>
    <property type="evidence" value="ECO:0007669"/>
    <property type="project" value="InterPro"/>
</dbReference>
<dbReference type="GO" id="GO:0009437">
    <property type="term" value="P:carnitine metabolic process"/>
    <property type="evidence" value="ECO:0007669"/>
    <property type="project" value="UniProtKB-UniRule"/>
</dbReference>
<dbReference type="GO" id="GO:0033539">
    <property type="term" value="P:fatty acid beta-oxidation using acyl-CoA dehydrogenase"/>
    <property type="evidence" value="ECO:0007669"/>
    <property type="project" value="TreeGrafter"/>
</dbReference>
<dbReference type="FunFam" id="3.40.50.1220:FF:000004">
    <property type="entry name" value="Electron transfer flavoprotein"/>
    <property type="match status" value="1"/>
</dbReference>
<dbReference type="FunFam" id="3.40.50.620:FF:000067">
    <property type="entry name" value="Protein FixB"/>
    <property type="match status" value="1"/>
</dbReference>
<dbReference type="Gene3D" id="3.40.50.620">
    <property type="entry name" value="HUPs"/>
    <property type="match status" value="1"/>
</dbReference>
<dbReference type="Gene3D" id="3.40.50.1220">
    <property type="entry name" value="TPP-binding domain"/>
    <property type="match status" value="1"/>
</dbReference>
<dbReference type="HAMAP" id="MF_01056">
    <property type="entry name" value="FixB"/>
    <property type="match status" value="1"/>
</dbReference>
<dbReference type="InterPro" id="IPR029035">
    <property type="entry name" value="DHS-like_NAD/FAD-binding_dom"/>
</dbReference>
<dbReference type="InterPro" id="IPR014730">
    <property type="entry name" value="ETF_a/b_N"/>
</dbReference>
<dbReference type="InterPro" id="IPR001308">
    <property type="entry name" value="ETF_a/FixB"/>
</dbReference>
<dbReference type="InterPro" id="IPR014731">
    <property type="entry name" value="ETF_asu_C"/>
</dbReference>
<dbReference type="InterPro" id="IPR018206">
    <property type="entry name" value="ETF_asu_C_CS"/>
</dbReference>
<dbReference type="InterPro" id="IPR023461">
    <property type="entry name" value="FixB"/>
</dbReference>
<dbReference type="InterPro" id="IPR014729">
    <property type="entry name" value="Rossmann-like_a/b/a_fold"/>
</dbReference>
<dbReference type="NCBIfam" id="NF002889">
    <property type="entry name" value="PRK03363.1"/>
    <property type="match status" value="1"/>
</dbReference>
<dbReference type="PANTHER" id="PTHR43153">
    <property type="entry name" value="ELECTRON TRANSFER FLAVOPROTEIN ALPHA"/>
    <property type="match status" value="1"/>
</dbReference>
<dbReference type="PANTHER" id="PTHR43153:SF5">
    <property type="entry name" value="PROTEIN FIXB-RELATED"/>
    <property type="match status" value="1"/>
</dbReference>
<dbReference type="Pfam" id="PF01012">
    <property type="entry name" value="ETF"/>
    <property type="match status" value="1"/>
</dbReference>
<dbReference type="Pfam" id="PF00766">
    <property type="entry name" value="ETF_alpha"/>
    <property type="match status" value="1"/>
</dbReference>
<dbReference type="PIRSF" id="PIRSF000089">
    <property type="entry name" value="Electra_flavoP_a"/>
    <property type="match status" value="1"/>
</dbReference>
<dbReference type="SMART" id="SM00893">
    <property type="entry name" value="ETF"/>
    <property type="match status" value="1"/>
</dbReference>
<dbReference type="SUPFAM" id="SSF52402">
    <property type="entry name" value="Adenine nucleotide alpha hydrolases-like"/>
    <property type="match status" value="1"/>
</dbReference>
<dbReference type="SUPFAM" id="SSF52467">
    <property type="entry name" value="DHS-like NAD/FAD-binding domain"/>
    <property type="match status" value="1"/>
</dbReference>
<dbReference type="PROSITE" id="PS00696">
    <property type="entry name" value="ETF_ALPHA"/>
    <property type="match status" value="1"/>
</dbReference>